<evidence type="ECO:0000255" key="1">
    <source>
        <dbReference type="PROSITE-ProRule" id="PRU00837"/>
    </source>
</evidence>
<evidence type="ECO:0000256" key="2">
    <source>
        <dbReference type="SAM" id="MobiDB-lite"/>
    </source>
</evidence>
<organism>
    <name type="scientific">Chironomus tentans</name>
    <name type="common">Midge</name>
    <name type="synonym">Camptochironomus tentans</name>
    <dbReference type="NCBI Taxonomy" id="7153"/>
    <lineage>
        <taxon>Eukaryota</taxon>
        <taxon>Metazoa</taxon>
        <taxon>Ecdysozoa</taxon>
        <taxon>Arthropoda</taxon>
        <taxon>Hexapoda</taxon>
        <taxon>Insecta</taxon>
        <taxon>Pterygota</taxon>
        <taxon>Neoptera</taxon>
        <taxon>Endopterygota</taxon>
        <taxon>Diptera</taxon>
        <taxon>Nematocera</taxon>
        <taxon>Chironomoidea</taxon>
        <taxon>Chironomidae</taxon>
        <taxon>Chironominae</taxon>
        <taxon>Chironomus</taxon>
    </lineage>
</organism>
<comment type="function">
    <text>Histones H1 are necessary for the condensation of nucleosome chains into higher-order structures.</text>
</comment>
<comment type="subcellular location">
    <subcellularLocation>
        <location>Nucleus</location>
    </subcellularLocation>
    <subcellularLocation>
        <location>Chromosome</location>
    </subcellularLocation>
</comment>
<comment type="similarity">
    <text evidence="1">Belongs to the histone H1/H5 family.</text>
</comment>
<accession>P40276</accession>
<name>H1B_CHITE</name>
<sequence>MSDPAVEVTPAVPVASPAKAKKEKKPKSDKPKKPKAPRTHPPVSEMVVNAVKTLKERGGSSLQAIKKFLVAQYKVDVDKLAPFIKKYLKSAVEKGQLLQTKGKGASGSFKLPAAAKKEKVVKKPTKAAAEKKPKKAAAKPKKAGEKKVKKTIAKKPKAAAATKIKKPVAKTTKKPAAAKPAAKKAAPKPKAAPKPKAAKTETKPKRAAAPKAKKPAAEKKPKAAKKPAAKKA</sequence>
<protein>
    <recommendedName>
        <fullName>Histone H1B</fullName>
    </recommendedName>
</protein>
<reference key="1">
    <citation type="submission" date="1994-03" db="EMBL/GenBank/DDBJ databases">
        <title>The two classes of histone H1 proteins of the dipteran genus Camptochironomus are encoded by organizationally divergent genes and differ by a DNA binding motif, KAPKAP.</title>
        <authorList>
            <person name="Schulze E."/>
            <person name="Wisniewski J.R."/>
            <person name="Nagel S."/>
            <person name="Gavenis K."/>
            <person name="Grossbach U."/>
        </authorList>
    </citation>
    <scope>NUCLEOTIDE SEQUENCE [GENOMIC DNA]</scope>
</reference>
<feature type="chain" id="PRO_0000195968" description="Histone H1B">
    <location>
        <begin position="1"/>
        <end position="232"/>
    </location>
</feature>
<feature type="domain" description="H15" evidence="1">
    <location>
        <begin position="39"/>
        <end position="113"/>
    </location>
</feature>
<feature type="region of interest" description="Disordered" evidence="2">
    <location>
        <begin position="1"/>
        <end position="44"/>
    </location>
</feature>
<feature type="region of interest" description="Disordered" evidence="2">
    <location>
        <begin position="99"/>
        <end position="232"/>
    </location>
</feature>
<feature type="compositionally biased region" description="Low complexity" evidence="2">
    <location>
        <begin position="1"/>
        <end position="18"/>
    </location>
</feature>
<feature type="compositionally biased region" description="Basic residues" evidence="2">
    <location>
        <begin position="132"/>
        <end position="141"/>
    </location>
</feature>
<feature type="compositionally biased region" description="Basic residues" evidence="2">
    <location>
        <begin position="147"/>
        <end position="173"/>
    </location>
</feature>
<feature type="compositionally biased region" description="Basic residues" evidence="2">
    <location>
        <begin position="181"/>
        <end position="197"/>
    </location>
</feature>
<feature type="compositionally biased region" description="Basic residues" evidence="2">
    <location>
        <begin position="205"/>
        <end position="214"/>
    </location>
</feature>
<feature type="compositionally biased region" description="Basic residues" evidence="2">
    <location>
        <begin position="222"/>
        <end position="232"/>
    </location>
</feature>
<proteinExistence type="inferred from homology"/>
<dbReference type="EMBL" id="L29108">
    <property type="protein sequence ID" value="AAA21716.1"/>
    <property type="molecule type" value="Genomic_DNA"/>
</dbReference>
<dbReference type="SMR" id="P40276"/>
<dbReference type="GO" id="GO:0000786">
    <property type="term" value="C:nucleosome"/>
    <property type="evidence" value="ECO:0007669"/>
    <property type="project" value="InterPro"/>
</dbReference>
<dbReference type="GO" id="GO:0005634">
    <property type="term" value="C:nucleus"/>
    <property type="evidence" value="ECO:0007669"/>
    <property type="project" value="UniProtKB-SubCell"/>
</dbReference>
<dbReference type="GO" id="GO:0003690">
    <property type="term" value="F:double-stranded DNA binding"/>
    <property type="evidence" value="ECO:0007669"/>
    <property type="project" value="TreeGrafter"/>
</dbReference>
<dbReference type="GO" id="GO:0031492">
    <property type="term" value="F:nucleosomal DNA binding"/>
    <property type="evidence" value="ECO:0007669"/>
    <property type="project" value="TreeGrafter"/>
</dbReference>
<dbReference type="GO" id="GO:0030527">
    <property type="term" value="F:structural constituent of chromatin"/>
    <property type="evidence" value="ECO:0007669"/>
    <property type="project" value="InterPro"/>
</dbReference>
<dbReference type="GO" id="GO:0030261">
    <property type="term" value="P:chromosome condensation"/>
    <property type="evidence" value="ECO:0007669"/>
    <property type="project" value="TreeGrafter"/>
</dbReference>
<dbReference type="GO" id="GO:0045910">
    <property type="term" value="P:negative regulation of DNA recombination"/>
    <property type="evidence" value="ECO:0007669"/>
    <property type="project" value="TreeGrafter"/>
</dbReference>
<dbReference type="GO" id="GO:0006334">
    <property type="term" value="P:nucleosome assembly"/>
    <property type="evidence" value="ECO:0007669"/>
    <property type="project" value="InterPro"/>
</dbReference>
<dbReference type="CDD" id="cd00073">
    <property type="entry name" value="H15"/>
    <property type="match status" value="1"/>
</dbReference>
<dbReference type="FunFam" id="1.10.10.10:FF:000140">
    <property type="entry name" value="Histone H1.0"/>
    <property type="match status" value="1"/>
</dbReference>
<dbReference type="Gene3D" id="1.10.10.10">
    <property type="entry name" value="Winged helix-like DNA-binding domain superfamily/Winged helix DNA-binding domain"/>
    <property type="match status" value="1"/>
</dbReference>
<dbReference type="InterPro" id="IPR005819">
    <property type="entry name" value="H1/H5"/>
</dbReference>
<dbReference type="InterPro" id="IPR005818">
    <property type="entry name" value="Histone_H1/H5_H15"/>
</dbReference>
<dbReference type="InterPro" id="IPR036388">
    <property type="entry name" value="WH-like_DNA-bd_sf"/>
</dbReference>
<dbReference type="InterPro" id="IPR036390">
    <property type="entry name" value="WH_DNA-bd_sf"/>
</dbReference>
<dbReference type="PANTHER" id="PTHR11467:SF20">
    <property type="entry name" value="H15 DOMAIN-CONTAINING PROTEIN-RELATED"/>
    <property type="match status" value="1"/>
</dbReference>
<dbReference type="PANTHER" id="PTHR11467">
    <property type="entry name" value="HISTONE H1"/>
    <property type="match status" value="1"/>
</dbReference>
<dbReference type="Pfam" id="PF00538">
    <property type="entry name" value="Linker_histone"/>
    <property type="match status" value="1"/>
</dbReference>
<dbReference type="PRINTS" id="PR00624">
    <property type="entry name" value="HISTONEH5"/>
</dbReference>
<dbReference type="SMART" id="SM00526">
    <property type="entry name" value="H15"/>
    <property type="match status" value="1"/>
</dbReference>
<dbReference type="SUPFAM" id="SSF46785">
    <property type="entry name" value="Winged helix' DNA-binding domain"/>
    <property type="match status" value="1"/>
</dbReference>
<dbReference type="PROSITE" id="PS51504">
    <property type="entry name" value="H15"/>
    <property type="match status" value="1"/>
</dbReference>
<keyword id="KW-0158">Chromosome</keyword>
<keyword id="KW-0238">DNA-binding</keyword>
<keyword id="KW-0539">Nucleus</keyword>